<name>DPB3_SCHPO</name>
<dbReference type="EMBL" id="CU329672">
    <property type="protein sequence ID" value="CBA11517.1"/>
    <property type="molecule type" value="Genomic_DNA"/>
</dbReference>
<dbReference type="RefSeq" id="XP_002788949.1">
    <property type="nucleotide sequence ID" value="XM_002788903.2"/>
</dbReference>
<dbReference type="PDB" id="5Y26">
    <property type="method" value="X-ray"/>
    <property type="resolution" value="2.00 A"/>
    <property type="chains" value="B=1-87"/>
</dbReference>
<dbReference type="PDB" id="5Y27">
    <property type="method" value="X-ray"/>
    <property type="resolution" value="1.90 A"/>
    <property type="chains" value="B=1-87"/>
</dbReference>
<dbReference type="PDBsum" id="5Y26"/>
<dbReference type="PDBsum" id="5Y27"/>
<dbReference type="SMR" id="C6Y4D0"/>
<dbReference type="BioGRID" id="1028329">
    <property type="interactions" value="5"/>
</dbReference>
<dbReference type="ComplexPortal" id="CPX-2111">
    <property type="entry name" value="DNA polymerase epsilon complex"/>
</dbReference>
<dbReference type="FunCoup" id="C6Y4D0">
    <property type="interactions" value="569"/>
</dbReference>
<dbReference type="STRING" id="284812.C6Y4D0"/>
<dbReference type="iPTMnet" id="C6Y4D0"/>
<dbReference type="PaxDb" id="4896-SPCC16C4.22.1"/>
<dbReference type="EnsemblFungi" id="SPCC16C4.22.1">
    <property type="protein sequence ID" value="SPCC16C4.22.1:pep"/>
    <property type="gene ID" value="SPCC16C4.22"/>
</dbReference>
<dbReference type="PomBase" id="SPCC16C4.22">
    <property type="gene designation" value="dpb3"/>
</dbReference>
<dbReference type="VEuPathDB" id="FungiDB:SPCC16C4.22"/>
<dbReference type="eggNOG" id="KOG1658">
    <property type="taxonomic scope" value="Eukaryota"/>
</dbReference>
<dbReference type="HOGENOM" id="CLU_045277_12_1_1"/>
<dbReference type="InParanoid" id="C6Y4D0"/>
<dbReference type="OMA" id="EDIHSCS"/>
<dbReference type="Reactome" id="R-SPO-110314">
    <property type="pathway name" value="Recognition of DNA damage by PCNA-containing replication complex"/>
</dbReference>
<dbReference type="Reactome" id="R-SPO-5651801">
    <property type="pathway name" value="PCNA-Dependent Long Patch Base Excision Repair"/>
</dbReference>
<dbReference type="Reactome" id="R-SPO-5656169">
    <property type="pathway name" value="Termination of translesion DNA synthesis"/>
</dbReference>
<dbReference type="Reactome" id="R-SPO-5696397">
    <property type="pathway name" value="Gap-filling DNA repair synthesis and ligation in GG-NER"/>
</dbReference>
<dbReference type="Reactome" id="R-SPO-5696400">
    <property type="pathway name" value="Dual Incision in GG-NER"/>
</dbReference>
<dbReference type="Reactome" id="R-SPO-6782135">
    <property type="pathway name" value="Dual incision in TC-NER"/>
</dbReference>
<dbReference type="Reactome" id="R-SPO-6782210">
    <property type="pathway name" value="Gap-filling DNA repair synthesis and ligation in TC-NER"/>
</dbReference>
<dbReference type="Reactome" id="R-SPO-68952">
    <property type="pathway name" value="DNA replication initiation"/>
</dbReference>
<dbReference type="Reactome" id="R-SPO-68962">
    <property type="pathway name" value="Activation of the pre-replicative complex"/>
</dbReference>
<dbReference type="PRO" id="PR:C6Y4D0"/>
<dbReference type="Proteomes" id="UP000002485">
    <property type="component" value="Chromosome III"/>
</dbReference>
<dbReference type="GO" id="GO:0008622">
    <property type="term" value="C:epsilon DNA polymerase complex"/>
    <property type="evidence" value="ECO:0000353"/>
    <property type="project" value="PomBase"/>
</dbReference>
<dbReference type="GO" id="GO:0043596">
    <property type="term" value="C:nuclear replication fork"/>
    <property type="evidence" value="ECO:0000305"/>
    <property type="project" value="PomBase"/>
</dbReference>
<dbReference type="GO" id="GO:0005634">
    <property type="term" value="C:nucleus"/>
    <property type="evidence" value="ECO:0000318"/>
    <property type="project" value="GO_Central"/>
</dbReference>
<dbReference type="GO" id="GO:0031491">
    <property type="term" value="F:nucleosome binding"/>
    <property type="evidence" value="ECO:0000269"/>
    <property type="project" value="PomBase"/>
</dbReference>
<dbReference type="GO" id="GO:0046982">
    <property type="term" value="F:protein heterodimerization activity"/>
    <property type="evidence" value="ECO:0007669"/>
    <property type="project" value="InterPro"/>
</dbReference>
<dbReference type="GO" id="GO:0140529">
    <property type="term" value="P:CMG complex assembly"/>
    <property type="evidence" value="ECO:0000305"/>
    <property type="project" value="PomBase"/>
</dbReference>
<dbReference type="GO" id="GO:0006335">
    <property type="term" value="P:DNA replication-dependent chromatin assembly"/>
    <property type="evidence" value="ECO:0000315"/>
    <property type="project" value="PomBase"/>
</dbReference>
<dbReference type="GO" id="GO:1902983">
    <property type="term" value="P:DNA strand elongation involved in mitotic DNA replication"/>
    <property type="evidence" value="ECO:0000305"/>
    <property type="project" value="PomBase"/>
</dbReference>
<dbReference type="GO" id="GO:0006261">
    <property type="term" value="P:DNA-templated DNA replication"/>
    <property type="evidence" value="ECO:0000318"/>
    <property type="project" value="GO_Central"/>
</dbReference>
<dbReference type="GO" id="GO:0031507">
    <property type="term" value="P:heterochromatin formation"/>
    <property type="evidence" value="ECO:0000315"/>
    <property type="project" value="PomBase"/>
</dbReference>
<dbReference type="GO" id="GO:1902975">
    <property type="term" value="P:mitotic DNA replication initiation"/>
    <property type="evidence" value="ECO:0000305"/>
    <property type="project" value="PomBase"/>
</dbReference>
<dbReference type="CDD" id="cd23645">
    <property type="entry name" value="HFD_Dpb3-like"/>
    <property type="match status" value="1"/>
</dbReference>
<dbReference type="Gene3D" id="1.10.20.10">
    <property type="entry name" value="Histone, subunit A"/>
    <property type="match status" value="1"/>
</dbReference>
<dbReference type="InterPro" id="IPR003958">
    <property type="entry name" value="CBFA_NFYB_domain"/>
</dbReference>
<dbReference type="InterPro" id="IPR009072">
    <property type="entry name" value="Histone-fold"/>
</dbReference>
<dbReference type="InterPro" id="IPR050568">
    <property type="entry name" value="Transcr_DNA_Rep_Reg"/>
</dbReference>
<dbReference type="PANTHER" id="PTHR10252:SF54">
    <property type="entry name" value="CHROMATIN ACCESSIBILITY COMPLEX PROTEIN 1"/>
    <property type="match status" value="1"/>
</dbReference>
<dbReference type="PANTHER" id="PTHR10252">
    <property type="entry name" value="HISTONE-LIKE TRANSCRIPTION FACTOR CCAAT-RELATED"/>
    <property type="match status" value="1"/>
</dbReference>
<dbReference type="Pfam" id="PF00808">
    <property type="entry name" value="CBFD_NFYB_HMF"/>
    <property type="match status" value="1"/>
</dbReference>
<dbReference type="SUPFAM" id="SSF47113">
    <property type="entry name" value="Histone-fold"/>
    <property type="match status" value="1"/>
</dbReference>
<sequence>MEKTYGKTVLPLSRVKRIIKQDEDVHYCSNASALLISVATELFVEKLATEAYQLAKLQKRKGIRYRDVEDVVRKDDQFEFLSDLFSI</sequence>
<protein>
    <recommendedName>
        <fullName evidence="3">DNA polymerase epsilon subunit C</fullName>
    </recommendedName>
    <alternativeName>
        <fullName evidence="3">DNA polymerase II subunit C</fullName>
    </alternativeName>
</protein>
<comment type="function">
    <text evidence="1 2">As accessory component of the DNA polymerase epsilon (DNA polymerase II) participates in chromosomal DNA replication. It is required during synthesis of the leading and lagging DNA strands at the replication fork and binds at/or near replication origins and moves along DNA with the replication fork. It has 3'-5' proofreading exonuclease activity that correct errors arising during DNA replication. It is also involved in DNA synthesis during DNA repair (By similarity). The dpb3-dpb4 dimer associates with histone deacetylases, chromatin remodelers, and histones and plays a crucial role in the inheritance of histone hypoacetylation and H3K9 methylation in heterochromatin (PubMed:29109278). The dpb3-dpb4 dimer is also required for the recruitment of sir2 to heterochromatin (PubMed:29109278).</text>
</comment>
<comment type="subunit">
    <text evidence="1 2">DNA polymerase epsilon is a heterotetramer consisting of cdc20/Pol2, dpb2, dpb3, and dpb4 (By similarity). Also forms a heterodimer consisting dpb3 and dpb4 (PubMed:29109278). Interacts directly with cdc20/pol2 and dpb4 (PubMed:29109278).</text>
</comment>
<comment type="subcellular location">
    <subcellularLocation>
        <location evidence="1">Nucleus</location>
    </subcellularLocation>
</comment>
<comment type="disruption phenotype">
    <text evidence="2">Displays partial loss of silencing in otr region as well as significant loss of silencing in mating-type and telomere (PubMed:29109278). Decreases H3K9 methylation more than 50%, whereas histone acetylation at the pericentromeric region is significantly increased (PubMed:29109278). Results in partial dissociation of swi6 from heterochromatin (PubMed:29109278).</text>
</comment>
<comment type="caution">
    <text evidence="2">SPAC17G8.03c was previously identified as the homolog of budding yeast DBP3 in fission yeast. However, it was further demonstrated that SPCC16C4.22 is the true ortholog of DBP3.</text>
</comment>
<evidence type="ECO:0000250" key="1">
    <source>
        <dbReference type="UniProtKB" id="P27344"/>
    </source>
</evidence>
<evidence type="ECO:0000269" key="2">
    <source>
    </source>
</evidence>
<evidence type="ECO:0000303" key="3">
    <source>
    </source>
</evidence>
<evidence type="ECO:0007744" key="4">
    <source>
        <dbReference type="PDB" id="5Y26"/>
    </source>
</evidence>
<evidence type="ECO:0007744" key="5">
    <source>
        <dbReference type="PDB" id="5Y27"/>
    </source>
</evidence>
<evidence type="ECO:0007829" key="6">
    <source>
        <dbReference type="PDB" id="5Y27"/>
    </source>
</evidence>
<proteinExistence type="evidence at protein level"/>
<organism>
    <name type="scientific">Schizosaccharomyces pombe (strain 972 / ATCC 24843)</name>
    <name type="common">Fission yeast</name>
    <dbReference type="NCBI Taxonomy" id="284812"/>
    <lineage>
        <taxon>Eukaryota</taxon>
        <taxon>Fungi</taxon>
        <taxon>Dikarya</taxon>
        <taxon>Ascomycota</taxon>
        <taxon>Taphrinomycotina</taxon>
        <taxon>Schizosaccharomycetes</taxon>
        <taxon>Schizosaccharomycetales</taxon>
        <taxon>Schizosaccharomycetaceae</taxon>
        <taxon>Schizosaccharomyces</taxon>
    </lineage>
</organism>
<keyword id="KW-0002">3D-structure</keyword>
<keyword id="KW-0235">DNA replication</keyword>
<keyword id="KW-0539">Nucleus</keyword>
<keyword id="KW-1185">Reference proteome</keyword>
<keyword id="KW-0804">Transcription</keyword>
<keyword id="KW-0805">Transcription regulation</keyword>
<gene>
    <name evidence="3" type="primary">dpb3</name>
    <name evidence="3" type="synonym">daf1</name>
    <name type="ORF">SPCC16C4.22</name>
</gene>
<accession>C6Y4D0</accession>
<feature type="chain" id="PRO_0000389112" description="DNA polymerase epsilon subunit C">
    <location>
        <begin position="1"/>
        <end position="87"/>
    </location>
</feature>
<feature type="helix" evidence="6">
    <location>
        <begin position="12"/>
        <end position="19"/>
    </location>
</feature>
<feature type="strand" evidence="6">
    <location>
        <begin position="26"/>
        <end position="28"/>
    </location>
</feature>
<feature type="helix" evidence="6">
    <location>
        <begin position="30"/>
        <end position="57"/>
    </location>
</feature>
<feature type="strand" evidence="6">
    <location>
        <begin position="61"/>
        <end position="63"/>
    </location>
</feature>
<feature type="helix" evidence="6">
    <location>
        <begin position="65"/>
        <end position="74"/>
    </location>
</feature>
<feature type="helix" evidence="6">
    <location>
        <begin position="76"/>
        <end position="81"/>
    </location>
</feature>
<feature type="turn" evidence="6">
    <location>
        <begin position="82"/>
        <end position="86"/>
    </location>
</feature>
<reference key="1">
    <citation type="journal article" date="2002" name="Nature">
        <title>The genome sequence of Schizosaccharomyces pombe.</title>
        <authorList>
            <person name="Wood V."/>
            <person name="Gwilliam R."/>
            <person name="Rajandream M.A."/>
            <person name="Lyne M.H."/>
            <person name="Lyne R."/>
            <person name="Stewart A."/>
            <person name="Sgouros J.G."/>
            <person name="Peat N."/>
            <person name="Hayles J."/>
            <person name="Baker S.G."/>
            <person name="Basham D."/>
            <person name="Bowman S."/>
            <person name="Brooks K."/>
            <person name="Brown D."/>
            <person name="Brown S."/>
            <person name="Chillingworth T."/>
            <person name="Churcher C.M."/>
            <person name="Collins M."/>
            <person name="Connor R."/>
            <person name="Cronin A."/>
            <person name="Davis P."/>
            <person name="Feltwell T."/>
            <person name="Fraser A."/>
            <person name="Gentles S."/>
            <person name="Goble A."/>
            <person name="Hamlin N."/>
            <person name="Harris D.E."/>
            <person name="Hidalgo J."/>
            <person name="Hodgson G."/>
            <person name="Holroyd S."/>
            <person name="Hornsby T."/>
            <person name="Howarth S."/>
            <person name="Huckle E.J."/>
            <person name="Hunt S."/>
            <person name="Jagels K."/>
            <person name="James K.D."/>
            <person name="Jones L."/>
            <person name="Jones M."/>
            <person name="Leather S."/>
            <person name="McDonald S."/>
            <person name="McLean J."/>
            <person name="Mooney P."/>
            <person name="Moule S."/>
            <person name="Mungall K.L."/>
            <person name="Murphy L.D."/>
            <person name="Niblett D."/>
            <person name="Odell C."/>
            <person name="Oliver K."/>
            <person name="O'Neil S."/>
            <person name="Pearson D."/>
            <person name="Quail M.A."/>
            <person name="Rabbinowitsch E."/>
            <person name="Rutherford K.M."/>
            <person name="Rutter S."/>
            <person name="Saunders D."/>
            <person name="Seeger K."/>
            <person name="Sharp S."/>
            <person name="Skelton J."/>
            <person name="Simmonds M.N."/>
            <person name="Squares R."/>
            <person name="Squares S."/>
            <person name="Stevens K."/>
            <person name="Taylor K."/>
            <person name="Taylor R.G."/>
            <person name="Tivey A."/>
            <person name="Walsh S.V."/>
            <person name="Warren T."/>
            <person name="Whitehead S."/>
            <person name="Woodward J.R."/>
            <person name="Volckaert G."/>
            <person name="Aert R."/>
            <person name="Robben J."/>
            <person name="Grymonprez B."/>
            <person name="Weltjens I."/>
            <person name="Vanstreels E."/>
            <person name="Rieger M."/>
            <person name="Schaefer M."/>
            <person name="Mueller-Auer S."/>
            <person name="Gabel C."/>
            <person name="Fuchs M."/>
            <person name="Duesterhoeft A."/>
            <person name="Fritzc C."/>
            <person name="Holzer E."/>
            <person name="Moestl D."/>
            <person name="Hilbert H."/>
            <person name="Borzym K."/>
            <person name="Langer I."/>
            <person name="Beck A."/>
            <person name="Lehrach H."/>
            <person name="Reinhardt R."/>
            <person name="Pohl T.M."/>
            <person name="Eger P."/>
            <person name="Zimmermann W."/>
            <person name="Wedler H."/>
            <person name="Wambutt R."/>
            <person name="Purnelle B."/>
            <person name="Goffeau A."/>
            <person name="Cadieu E."/>
            <person name="Dreano S."/>
            <person name="Gloux S."/>
            <person name="Lelaure V."/>
            <person name="Mottier S."/>
            <person name="Galibert F."/>
            <person name="Aves S.J."/>
            <person name="Xiang Z."/>
            <person name="Hunt C."/>
            <person name="Moore K."/>
            <person name="Hurst S.M."/>
            <person name="Lucas M."/>
            <person name="Rochet M."/>
            <person name="Gaillardin C."/>
            <person name="Tallada V.A."/>
            <person name="Garzon A."/>
            <person name="Thode G."/>
            <person name="Daga R.R."/>
            <person name="Cruzado L."/>
            <person name="Jimenez J."/>
            <person name="Sanchez M."/>
            <person name="del Rey F."/>
            <person name="Benito J."/>
            <person name="Dominguez A."/>
            <person name="Revuelta J.L."/>
            <person name="Moreno S."/>
            <person name="Armstrong J."/>
            <person name="Forsburg S.L."/>
            <person name="Cerutti L."/>
            <person name="Lowe T."/>
            <person name="McCombie W.R."/>
            <person name="Paulsen I."/>
            <person name="Potashkin J."/>
            <person name="Shpakovski G.V."/>
            <person name="Ussery D."/>
            <person name="Barrell B.G."/>
            <person name="Nurse P."/>
        </authorList>
    </citation>
    <scope>NUCLEOTIDE SEQUENCE [LARGE SCALE GENOMIC DNA]</scope>
    <source>
        <strain>972 / ATCC 24843</strain>
    </source>
</reference>
<reference evidence="4 5" key="2">
    <citation type="journal article" date="2017" name="Proc. Natl. Acad. Sci. U.S.A.">
        <title>Coordinated regulation of heterochromatin inheritance by Dpb3-Dpb4 complex.</title>
        <authorList>
            <person name="He H."/>
            <person name="Li Y."/>
            <person name="Dong Q."/>
            <person name="Chang A.Y."/>
            <person name="Gao F."/>
            <person name="Chi Z."/>
            <person name="Su M."/>
            <person name="Zhang F."/>
            <person name="Ban H."/>
            <person name="Martienssen R."/>
            <person name="Chen Y.H."/>
            <person name="Li F."/>
        </authorList>
    </citation>
    <scope>X-RAY CRYSTALLOGRAPHY (1.90 ANGSTROMS) IN COMPLEX WITH DPB4</scope>
    <scope>INTERACTION WITH DPB4 AND CDC20</scope>
    <scope>DISRUPTION PHENOTYPE</scope>
    <scope>FUNCTION</scope>
</reference>